<dbReference type="EC" id="2.1.1.189" evidence="1"/>
<dbReference type="EMBL" id="CP000826">
    <property type="protein sequence ID" value="ABV40754.1"/>
    <property type="molecule type" value="Genomic_DNA"/>
</dbReference>
<dbReference type="SMR" id="A8GCB4"/>
<dbReference type="STRING" id="399741.Spro_1650"/>
<dbReference type="KEGG" id="spe:Spro_1650"/>
<dbReference type="eggNOG" id="COG2265">
    <property type="taxonomic scope" value="Bacteria"/>
</dbReference>
<dbReference type="HOGENOM" id="CLU_014689_0_0_6"/>
<dbReference type="OrthoDB" id="9804590at2"/>
<dbReference type="GO" id="GO:0051539">
    <property type="term" value="F:4 iron, 4 sulfur cluster binding"/>
    <property type="evidence" value="ECO:0007669"/>
    <property type="project" value="UniProtKB-KW"/>
</dbReference>
<dbReference type="GO" id="GO:0005506">
    <property type="term" value="F:iron ion binding"/>
    <property type="evidence" value="ECO:0007669"/>
    <property type="project" value="UniProtKB-UniRule"/>
</dbReference>
<dbReference type="GO" id="GO:0070041">
    <property type="term" value="F:rRNA (uridine-C5-)-methyltransferase activity"/>
    <property type="evidence" value="ECO:0007669"/>
    <property type="project" value="UniProtKB-UniRule"/>
</dbReference>
<dbReference type="GO" id="GO:0070475">
    <property type="term" value="P:rRNA base methylation"/>
    <property type="evidence" value="ECO:0007669"/>
    <property type="project" value="TreeGrafter"/>
</dbReference>
<dbReference type="CDD" id="cd02440">
    <property type="entry name" value="AdoMet_MTases"/>
    <property type="match status" value="1"/>
</dbReference>
<dbReference type="FunFam" id="2.40.50.1070:FF:000002">
    <property type="entry name" value="23S rRNA (uracil(747)-C(5))-methyltransferase RlmC"/>
    <property type="match status" value="1"/>
</dbReference>
<dbReference type="Gene3D" id="2.40.50.1070">
    <property type="match status" value="1"/>
</dbReference>
<dbReference type="Gene3D" id="3.40.50.150">
    <property type="entry name" value="Vaccinia Virus protein VP39"/>
    <property type="match status" value="1"/>
</dbReference>
<dbReference type="HAMAP" id="MF_01012">
    <property type="entry name" value="23SrRNA_methyltr_RlmC"/>
    <property type="match status" value="1"/>
</dbReference>
<dbReference type="InterPro" id="IPR011825">
    <property type="entry name" value="23SrRNA_MeTrfase_RlmC"/>
</dbReference>
<dbReference type="InterPro" id="IPR030390">
    <property type="entry name" value="MeTrfase_TrmA_AS"/>
</dbReference>
<dbReference type="InterPro" id="IPR030391">
    <property type="entry name" value="MeTrfase_TrmA_CS"/>
</dbReference>
<dbReference type="InterPro" id="IPR029063">
    <property type="entry name" value="SAM-dependent_MTases_sf"/>
</dbReference>
<dbReference type="InterPro" id="IPR010280">
    <property type="entry name" value="U5_MeTrfase_fam"/>
</dbReference>
<dbReference type="NCBIfam" id="TIGR02085">
    <property type="entry name" value="meth_trns_rumB"/>
    <property type="match status" value="1"/>
</dbReference>
<dbReference type="PANTHER" id="PTHR11061">
    <property type="entry name" value="RNA M5U METHYLTRANSFERASE"/>
    <property type="match status" value="1"/>
</dbReference>
<dbReference type="PANTHER" id="PTHR11061:SF30">
    <property type="entry name" value="TRNA (URACIL(54)-C(5))-METHYLTRANSFERASE"/>
    <property type="match status" value="1"/>
</dbReference>
<dbReference type="Pfam" id="PF05958">
    <property type="entry name" value="tRNA_U5-meth_tr"/>
    <property type="match status" value="1"/>
</dbReference>
<dbReference type="SUPFAM" id="SSF53335">
    <property type="entry name" value="S-adenosyl-L-methionine-dependent methyltransferases"/>
    <property type="match status" value="1"/>
</dbReference>
<dbReference type="PROSITE" id="PS51687">
    <property type="entry name" value="SAM_MT_RNA_M5U"/>
    <property type="match status" value="1"/>
</dbReference>
<dbReference type="PROSITE" id="PS01230">
    <property type="entry name" value="TRMA_1"/>
    <property type="match status" value="1"/>
</dbReference>
<dbReference type="PROSITE" id="PS01231">
    <property type="entry name" value="TRMA_2"/>
    <property type="match status" value="1"/>
</dbReference>
<organism>
    <name type="scientific">Serratia proteamaculans (strain 568)</name>
    <dbReference type="NCBI Taxonomy" id="399741"/>
    <lineage>
        <taxon>Bacteria</taxon>
        <taxon>Pseudomonadati</taxon>
        <taxon>Pseudomonadota</taxon>
        <taxon>Gammaproteobacteria</taxon>
        <taxon>Enterobacterales</taxon>
        <taxon>Yersiniaceae</taxon>
        <taxon>Serratia</taxon>
    </lineage>
</organism>
<keyword id="KW-0004">4Fe-4S</keyword>
<keyword id="KW-0408">Iron</keyword>
<keyword id="KW-0411">Iron-sulfur</keyword>
<keyword id="KW-0479">Metal-binding</keyword>
<keyword id="KW-0489">Methyltransferase</keyword>
<keyword id="KW-0698">rRNA processing</keyword>
<keyword id="KW-0949">S-adenosyl-L-methionine</keyword>
<keyword id="KW-0808">Transferase</keyword>
<accession>A8GCB4</accession>
<proteinExistence type="inferred from homology"/>
<comment type="function">
    <text evidence="1">Catalyzes the formation of 5-methyl-uridine at position 747 (m5U747) in 23S rRNA.</text>
</comment>
<comment type="catalytic activity">
    <reaction evidence="1">
        <text>uridine(747) in 23S rRNA + S-adenosyl-L-methionine = 5-methyluridine(747) in 23S rRNA + S-adenosyl-L-homocysteine + H(+)</text>
        <dbReference type="Rhea" id="RHEA:42628"/>
        <dbReference type="Rhea" id="RHEA-COMP:10154"/>
        <dbReference type="Rhea" id="RHEA-COMP:10155"/>
        <dbReference type="ChEBI" id="CHEBI:15378"/>
        <dbReference type="ChEBI" id="CHEBI:57856"/>
        <dbReference type="ChEBI" id="CHEBI:59789"/>
        <dbReference type="ChEBI" id="CHEBI:65315"/>
        <dbReference type="ChEBI" id="CHEBI:74447"/>
        <dbReference type="EC" id="2.1.1.189"/>
    </reaction>
</comment>
<comment type="similarity">
    <text evidence="1">Belongs to the class I-like SAM-binding methyltransferase superfamily. RNA M5U methyltransferase family. RlmC subfamily.</text>
</comment>
<reference key="1">
    <citation type="submission" date="2007-09" db="EMBL/GenBank/DDBJ databases">
        <title>Complete sequence of chromosome of Serratia proteamaculans 568.</title>
        <authorList>
            <consortium name="US DOE Joint Genome Institute"/>
            <person name="Copeland A."/>
            <person name="Lucas S."/>
            <person name="Lapidus A."/>
            <person name="Barry K."/>
            <person name="Glavina del Rio T."/>
            <person name="Dalin E."/>
            <person name="Tice H."/>
            <person name="Pitluck S."/>
            <person name="Chain P."/>
            <person name="Malfatti S."/>
            <person name="Shin M."/>
            <person name="Vergez L."/>
            <person name="Schmutz J."/>
            <person name="Larimer F."/>
            <person name="Land M."/>
            <person name="Hauser L."/>
            <person name="Kyrpides N."/>
            <person name="Kim E."/>
            <person name="Taghavi S."/>
            <person name="Newman L."/>
            <person name="Vangronsveld J."/>
            <person name="van der Lelie D."/>
            <person name="Richardson P."/>
        </authorList>
    </citation>
    <scope>NUCLEOTIDE SEQUENCE [LARGE SCALE GENOMIC DNA]</scope>
    <source>
        <strain>568</strain>
    </source>
</reference>
<name>RLMC_SERP5</name>
<sequence>MHCALYTAGTCRSCQWLEKPYPQQLTDKQHHLQSLLSDRDVAQWLEPIAGEQSAFRNKAKMVVSGSVERPLLGMLHRDGTAVDLSACPLYPASFSPMFDVLKSFIARAGLTPYNVARKRGELKYLLLTESTHSGGVMLRFVLRSDNKLAQLRAALPWLQQQLPQLRVISANIQPVHMAIMEGEREIPLTEQQALEEQFNQVPLYIRPQSFFQTNPQVAAELYATARDWVRALAIDSMWDLFCGVGGFGLHCALPETRLTGIEISAEAIACARQSAKTLGLQHVDFQALDSTRFATAEGSVPQLVLVNPPRRGIGKALCDYLNQMAPGYILYSSCNAESMAKDIEMLPDYRIERVQLFDMFPHTAHYEVLTLLVRN</sequence>
<feature type="chain" id="PRO_1000063004" description="23S rRNA (uracil(747)-C(5))-methyltransferase RlmC">
    <location>
        <begin position="1"/>
        <end position="375"/>
    </location>
</feature>
<feature type="active site" description="Nucleophile" evidence="1">
    <location>
        <position position="334"/>
    </location>
</feature>
<feature type="binding site" evidence="1">
    <location>
        <position position="3"/>
    </location>
    <ligand>
        <name>[4Fe-4S] cluster</name>
        <dbReference type="ChEBI" id="CHEBI:49883"/>
    </ligand>
</feature>
<feature type="binding site" evidence="1">
    <location>
        <position position="11"/>
    </location>
    <ligand>
        <name>[4Fe-4S] cluster</name>
        <dbReference type="ChEBI" id="CHEBI:49883"/>
    </ligand>
</feature>
<feature type="binding site" evidence="1">
    <location>
        <position position="14"/>
    </location>
    <ligand>
        <name>[4Fe-4S] cluster</name>
        <dbReference type="ChEBI" id="CHEBI:49883"/>
    </ligand>
</feature>
<feature type="binding site" evidence="1">
    <location>
        <position position="87"/>
    </location>
    <ligand>
        <name>[4Fe-4S] cluster</name>
        <dbReference type="ChEBI" id="CHEBI:49883"/>
    </ligand>
</feature>
<feature type="binding site" evidence="1">
    <location>
        <position position="212"/>
    </location>
    <ligand>
        <name>S-adenosyl-L-methionine</name>
        <dbReference type="ChEBI" id="CHEBI:59789"/>
    </ligand>
</feature>
<feature type="binding site" evidence="1">
    <location>
        <position position="241"/>
    </location>
    <ligand>
        <name>S-adenosyl-L-methionine</name>
        <dbReference type="ChEBI" id="CHEBI:59789"/>
    </ligand>
</feature>
<feature type="binding site" evidence="1">
    <location>
        <position position="262"/>
    </location>
    <ligand>
        <name>S-adenosyl-L-methionine</name>
        <dbReference type="ChEBI" id="CHEBI:59789"/>
    </ligand>
</feature>
<feature type="binding site" evidence="1">
    <location>
        <position position="307"/>
    </location>
    <ligand>
        <name>S-adenosyl-L-methionine</name>
        <dbReference type="ChEBI" id="CHEBI:59789"/>
    </ligand>
</feature>
<gene>
    <name evidence="1" type="primary">rlmC</name>
    <name type="synonym">rumB</name>
    <name type="ordered locus">Spro_1650</name>
</gene>
<protein>
    <recommendedName>
        <fullName evidence="1">23S rRNA (uracil(747)-C(5))-methyltransferase RlmC</fullName>
        <ecNumber evidence="1">2.1.1.189</ecNumber>
    </recommendedName>
    <alternativeName>
        <fullName evidence="1">23S rRNA(m5U747)-methyltransferase</fullName>
    </alternativeName>
</protein>
<evidence type="ECO:0000255" key="1">
    <source>
        <dbReference type="HAMAP-Rule" id="MF_01012"/>
    </source>
</evidence>